<reference key="1">
    <citation type="journal article" date="2007" name="Genes Dev.">
        <title>New insights into Acinetobacter baumannii pathogenesis revealed by high-density pyrosequencing and transposon mutagenesis.</title>
        <authorList>
            <person name="Smith M.G."/>
            <person name="Gianoulis T.A."/>
            <person name="Pukatzki S."/>
            <person name="Mekalanos J.J."/>
            <person name="Ornston L.N."/>
            <person name="Gerstein M."/>
            <person name="Snyder M."/>
        </authorList>
    </citation>
    <scope>NUCLEOTIDE SEQUENCE [LARGE SCALE GENOMIC DNA]</scope>
    <source>
        <strain>ATCC 17978 / DSM 105126 / CIP 53.77 / LMG 1025 / NCDC KC755 / 5377</strain>
    </source>
</reference>
<dbReference type="EMBL" id="CP000521">
    <property type="protein sequence ID" value="ABO10756.1"/>
    <property type="molecule type" value="Genomic_DNA"/>
</dbReference>
<dbReference type="RefSeq" id="WP_001229360.1">
    <property type="nucleotide sequence ID" value="NZ_CP053098.1"/>
</dbReference>
<dbReference type="SMR" id="A3M1G2"/>
<dbReference type="GeneID" id="92892283"/>
<dbReference type="KEGG" id="acb:A1S_0286"/>
<dbReference type="HOGENOM" id="CLU_086499_3_2_6"/>
<dbReference type="GO" id="GO:0022625">
    <property type="term" value="C:cytosolic large ribosomal subunit"/>
    <property type="evidence" value="ECO:0007669"/>
    <property type="project" value="TreeGrafter"/>
</dbReference>
<dbReference type="GO" id="GO:0003729">
    <property type="term" value="F:mRNA binding"/>
    <property type="evidence" value="ECO:0007669"/>
    <property type="project" value="TreeGrafter"/>
</dbReference>
<dbReference type="GO" id="GO:0003735">
    <property type="term" value="F:structural constituent of ribosome"/>
    <property type="evidence" value="ECO:0007669"/>
    <property type="project" value="InterPro"/>
</dbReference>
<dbReference type="GO" id="GO:0006412">
    <property type="term" value="P:translation"/>
    <property type="evidence" value="ECO:0007669"/>
    <property type="project" value="UniProtKB-UniRule"/>
</dbReference>
<dbReference type="CDD" id="cd00387">
    <property type="entry name" value="Ribosomal_L7_L12"/>
    <property type="match status" value="1"/>
</dbReference>
<dbReference type="FunFam" id="3.30.1390.10:FF:000001">
    <property type="entry name" value="50S ribosomal protein L7/L12"/>
    <property type="match status" value="1"/>
</dbReference>
<dbReference type="Gene3D" id="3.30.1390.10">
    <property type="match status" value="1"/>
</dbReference>
<dbReference type="Gene3D" id="1.20.5.710">
    <property type="entry name" value="Single helix bin"/>
    <property type="match status" value="1"/>
</dbReference>
<dbReference type="HAMAP" id="MF_00368">
    <property type="entry name" value="Ribosomal_bL12"/>
    <property type="match status" value="1"/>
</dbReference>
<dbReference type="InterPro" id="IPR000206">
    <property type="entry name" value="Ribosomal_bL12"/>
</dbReference>
<dbReference type="InterPro" id="IPR013823">
    <property type="entry name" value="Ribosomal_bL12_C"/>
</dbReference>
<dbReference type="InterPro" id="IPR014719">
    <property type="entry name" value="Ribosomal_bL12_C/ClpS-like"/>
</dbReference>
<dbReference type="InterPro" id="IPR008932">
    <property type="entry name" value="Ribosomal_bL12_oligo"/>
</dbReference>
<dbReference type="InterPro" id="IPR036235">
    <property type="entry name" value="Ribosomal_bL12_oligo_N_sf"/>
</dbReference>
<dbReference type="NCBIfam" id="TIGR00855">
    <property type="entry name" value="L12"/>
    <property type="match status" value="1"/>
</dbReference>
<dbReference type="PANTHER" id="PTHR45987">
    <property type="entry name" value="39S RIBOSOMAL PROTEIN L12"/>
    <property type="match status" value="1"/>
</dbReference>
<dbReference type="PANTHER" id="PTHR45987:SF4">
    <property type="entry name" value="LARGE RIBOSOMAL SUBUNIT PROTEIN BL12M"/>
    <property type="match status" value="1"/>
</dbReference>
<dbReference type="Pfam" id="PF00542">
    <property type="entry name" value="Ribosomal_L12"/>
    <property type="match status" value="1"/>
</dbReference>
<dbReference type="Pfam" id="PF16320">
    <property type="entry name" value="Ribosomal_L12_N"/>
    <property type="match status" value="1"/>
</dbReference>
<dbReference type="SUPFAM" id="SSF54736">
    <property type="entry name" value="ClpS-like"/>
    <property type="match status" value="1"/>
</dbReference>
<dbReference type="SUPFAM" id="SSF48300">
    <property type="entry name" value="Ribosomal protein L7/12, oligomerisation (N-terminal) domain"/>
    <property type="match status" value="1"/>
</dbReference>
<organism>
    <name type="scientific">Acinetobacter baumannii (strain ATCC 17978 / DSM 105126 / CIP 53.77 / LMG 1025 / NCDC KC755 / 5377)</name>
    <dbReference type="NCBI Taxonomy" id="400667"/>
    <lineage>
        <taxon>Bacteria</taxon>
        <taxon>Pseudomonadati</taxon>
        <taxon>Pseudomonadota</taxon>
        <taxon>Gammaproteobacteria</taxon>
        <taxon>Moraxellales</taxon>
        <taxon>Moraxellaceae</taxon>
        <taxon>Acinetobacter</taxon>
        <taxon>Acinetobacter calcoaceticus/baumannii complex</taxon>
    </lineage>
</organism>
<evidence type="ECO:0000255" key="1">
    <source>
        <dbReference type="HAMAP-Rule" id="MF_00368"/>
    </source>
</evidence>
<evidence type="ECO:0000305" key="2"/>
<sequence>MALTNEEILNAVAEKTVLELVELISAFEEKFNVSAAAVAVAAPAGGAAAAAEEQSEFNVELTSFGANKVAVIKAVREATGLGLKEAKDLVEGAPQVLKEGVSKEEGEELKKKLEEAGATVTLK</sequence>
<gene>
    <name evidence="1" type="primary">rplL</name>
    <name type="ordered locus">A1S_0286</name>
</gene>
<proteinExistence type="inferred from homology"/>
<accession>A3M1G2</accession>
<name>RL7_ACIBT</name>
<feature type="chain" id="PRO_1000006947" description="Large ribosomal subunit protein bL12">
    <location>
        <begin position="1"/>
        <end position="123"/>
    </location>
</feature>
<comment type="function">
    <text evidence="1">Forms part of the ribosomal stalk which helps the ribosome interact with GTP-bound translation factors. Is thus essential for accurate translation.</text>
</comment>
<comment type="subunit">
    <text evidence="1">Homodimer. Part of the ribosomal stalk of the 50S ribosomal subunit. Forms a multimeric L10(L12)X complex, where L10 forms an elongated spine to which 2 to 4 L12 dimers bind in a sequential fashion. Binds GTP-bound translation factors.</text>
</comment>
<comment type="similarity">
    <text evidence="1">Belongs to the bacterial ribosomal protein bL12 family.</text>
</comment>
<protein>
    <recommendedName>
        <fullName evidence="1">Large ribosomal subunit protein bL12</fullName>
    </recommendedName>
    <alternativeName>
        <fullName evidence="2">50S ribosomal protein L7/L12</fullName>
    </alternativeName>
</protein>
<keyword id="KW-0687">Ribonucleoprotein</keyword>
<keyword id="KW-0689">Ribosomal protein</keyword>